<gene>
    <name evidence="1" type="primary">lipA</name>
    <name type="ordered locus">Pcryo_0744</name>
</gene>
<accession>Q1QCS6</accession>
<sequence length="347" mass="39139">MTNAVQTHTPAARAKPKKAIQGEKLRGYDKVARIPIKIIPTVEAKKKPDWIRVKLSSPAEVARIKSTLREQKLYTVCEEAACPNLPQCFADGTATFMIMGDICTRRCPFCDVGHGRPNELDKDEPRHTAETIQGLGLKYAVITSVDRDDLKDGGAMHFVEVLNESRALSPNCLIEILVPDFRGRMDIALDLLTETAPDVFNHNIETVPRLYKAFRPGSDYQHSLDLLKIYKERRPDIATKCGFMVGLGETEEEIYKLLDDLKAHNVDMITVGQYLQPSKDHAPVDRYVHPDEFQRYMDYGKKIGFFNIWAGPMVRSSYFADRQYYGEDCPAPIRSKKALAAEGKLGC</sequence>
<proteinExistence type="inferred from homology"/>
<name>LIPA_PSYCK</name>
<feature type="chain" id="PRO_0000325295" description="Lipoyl synthase">
    <location>
        <begin position="1"/>
        <end position="347"/>
    </location>
</feature>
<feature type="domain" description="Radical SAM core" evidence="2">
    <location>
        <begin position="89"/>
        <end position="306"/>
    </location>
</feature>
<feature type="binding site" evidence="1">
    <location>
        <position position="77"/>
    </location>
    <ligand>
        <name>[4Fe-4S] cluster</name>
        <dbReference type="ChEBI" id="CHEBI:49883"/>
        <label>1</label>
    </ligand>
</feature>
<feature type="binding site" evidence="1">
    <location>
        <position position="82"/>
    </location>
    <ligand>
        <name>[4Fe-4S] cluster</name>
        <dbReference type="ChEBI" id="CHEBI:49883"/>
        <label>1</label>
    </ligand>
</feature>
<feature type="binding site" evidence="1">
    <location>
        <position position="88"/>
    </location>
    <ligand>
        <name>[4Fe-4S] cluster</name>
        <dbReference type="ChEBI" id="CHEBI:49883"/>
        <label>1</label>
    </ligand>
</feature>
<feature type="binding site" evidence="1">
    <location>
        <position position="103"/>
    </location>
    <ligand>
        <name>[4Fe-4S] cluster</name>
        <dbReference type="ChEBI" id="CHEBI:49883"/>
        <label>2</label>
        <note>4Fe-4S-S-AdoMet</note>
    </ligand>
</feature>
<feature type="binding site" evidence="1">
    <location>
        <position position="107"/>
    </location>
    <ligand>
        <name>[4Fe-4S] cluster</name>
        <dbReference type="ChEBI" id="CHEBI:49883"/>
        <label>2</label>
        <note>4Fe-4S-S-AdoMet</note>
    </ligand>
</feature>
<feature type="binding site" evidence="1">
    <location>
        <position position="110"/>
    </location>
    <ligand>
        <name>[4Fe-4S] cluster</name>
        <dbReference type="ChEBI" id="CHEBI:49883"/>
        <label>2</label>
        <note>4Fe-4S-S-AdoMet</note>
    </ligand>
</feature>
<feature type="binding site" evidence="1">
    <location>
        <position position="317"/>
    </location>
    <ligand>
        <name>[4Fe-4S] cluster</name>
        <dbReference type="ChEBI" id="CHEBI:49883"/>
        <label>1</label>
    </ligand>
</feature>
<protein>
    <recommendedName>
        <fullName evidence="1">Lipoyl synthase</fullName>
        <ecNumber evidence="1">2.8.1.8</ecNumber>
    </recommendedName>
    <alternativeName>
        <fullName evidence="1">Lip-syn</fullName>
        <shortName evidence="1">LS</shortName>
    </alternativeName>
    <alternativeName>
        <fullName evidence="1">Lipoate synthase</fullName>
    </alternativeName>
    <alternativeName>
        <fullName evidence="1">Lipoic acid synthase</fullName>
    </alternativeName>
    <alternativeName>
        <fullName evidence="1">Sulfur insertion protein LipA</fullName>
    </alternativeName>
</protein>
<keyword id="KW-0004">4Fe-4S</keyword>
<keyword id="KW-0963">Cytoplasm</keyword>
<keyword id="KW-0408">Iron</keyword>
<keyword id="KW-0411">Iron-sulfur</keyword>
<keyword id="KW-0479">Metal-binding</keyword>
<keyword id="KW-0949">S-adenosyl-L-methionine</keyword>
<keyword id="KW-0808">Transferase</keyword>
<evidence type="ECO:0000255" key="1">
    <source>
        <dbReference type="HAMAP-Rule" id="MF_00206"/>
    </source>
</evidence>
<evidence type="ECO:0000255" key="2">
    <source>
        <dbReference type="PROSITE-ProRule" id="PRU01266"/>
    </source>
</evidence>
<comment type="function">
    <text evidence="1">Catalyzes the radical-mediated insertion of two sulfur atoms into the C-6 and C-8 positions of the octanoyl moiety bound to the lipoyl domains of lipoate-dependent enzymes, thereby converting the octanoylated domains into lipoylated derivatives.</text>
</comment>
<comment type="catalytic activity">
    <reaction evidence="1">
        <text>[[Fe-S] cluster scaffold protein carrying a second [4Fe-4S](2+) cluster] + N(6)-octanoyl-L-lysyl-[protein] + 2 oxidized [2Fe-2S]-[ferredoxin] + 2 S-adenosyl-L-methionine + 4 H(+) = [[Fe-S] cluster scaffold protein] + N(6)-[(R)-dihydrolipoyl]-L-lysyl-[protein] + 4 Fe(3+) + 2 hydrogen sulfide + 2 5'-deoxyadenosine + 2 L-methionine + 2 reduced [2Fe-2S]-[ferredoxin]</text>
        <dbReference type="Rhea" id="RHEA:16585"/>
        <dbReference type="Rhea" id="RHEA-COMP:9928"/>
        <dbReference type="Rhea" id="RHEA-COMP:10000"/>
        <dbReference type="Rhea" id="RHEA-COMP:10001"/>
        <dbReference type="Rhea" id="RHEA-COMP:10475"/>
        <dbReference type="Rhea" id="RHEA-COMP:14568"/>
        <dbReference type="Rhea" id="RHEA-COMP:14569"/>
        <dbReference type="ChEBI" id="CHEBI:15378"/>
        <dbReference type="ChEBI" id="CHEBI:17319"/>
        <dbReference type="ChEBI" id="CHEBI:29034"/>
        <dbReference type="ChEBI" id="CHEBI:29919"/>
        <dbReference type="ChEBI" id="CHEBI:33722"/>
        <dbReference type="ChEBI" id="CHEBI:33737"/>
        <dbReference type="ChEBI" id="CHEBI:33738"/>
        <dbReference type="ChEBI" id="CHEBI:57844"/>
        <dbReference type="ChEBI" id="CHEBI:59789"/>
        <dbReference type="ChEBI" id="CHEBI:78809"/>
        <dbReference type="ChEBI" id="CHEBI:83100"/>
        <dbReference type="EC" id="2.8.1.8"/>
    </reaction>
</comment>
<comment type="cofactor">
    <cofactor evidence="1">
        <name>[4Fe-4S] cluster</name>
        <dbReference type="ChEBI" id="CHEBI:49883"/>
    </cofactor>
    <text evidence="1">Binds 2 [4Fe-4S] clusters per subunit. One cluster is coordinated with 3 cysteines and an exchangeable S-adenosyl-L-methionine.</text>
</comment>
<comment type="pathway">
    <text evidence="1">Protein modification; protein lipoylation via endogenous pathway; protein N(6)-(lipoyl)lysine from octanoyl-[acyl-carrier-protein]: step 2/2.</text>
</comment>
<comment type="subcellular location">
    <subcellularLocation>
        <location evidence="1">Cytoplasm</location>
    </subcellularLocation>
</comment>
<comment type="similarity">
    <text evidence="1">Belongs to the radical SAM superfamily. Lipoyl synthase family.</text>
</comment>
<organism>
    <name type="scientific">Psychrobacter cryohalolentis (strain ATCC BAA-1226 / DSM 17306 / VKM B-2378 / K5)</name>
    <dbReference type="NCBI Taxonomy" id="335284"/>
    <lineage>
        <taxon>Bacteria</taxon>
        <taxon>Pseudomonadati</taxon>
        <taxon>Pseudomonadota</taxon>
        <taxon>Gammaproteobacteria</taxon>
        <taxon>Moraxellales</taxon>
        <taxon>Moraxellaceae</taxon>
        <taxon>Psychrobacter</taxon>
    </lineage>
</organism>
<dbReference type="EC" id="2.8.1.8" evidence="1"/>
<dbReference type="EMBL" id="CP000323">
    <property type="protein sequence ID" value="ABE74527.1"/>
    <property type="molecule type" value="Genomic_DNA"/>
</dbReference>
<dbReference type="RefSeq" id="WP_011513094.1">
    <property type="nucleotide sequence ID" value="NC_007969.1"/>
</dbReference>
<dbReference type="SMR" id="Q1QCS6"/>
<dbReference type="STRING" id="335284.Pcryo_0744"/>
<dbReference type="KEGG" id="pcr:Pcryo_0744"/>
<dbReference type="eggNOG" id="COG0320">
    <property type="taxonomic scope" value="Bacteria"/>
</dbReference>
<dbReference type="HOGENOM" id="CLU_033144_2_1_6"/>
<dbReference type="UniPathway" id="UPA00538">
    <property type="reaction ID" value="UER00593"/>
</dbReference>
<dbReference type="Proteomes" id="UP000002425">
    <property type="component" value="Chromosome"/>
</dbReference>
<dbReference type="GO" id="GO:0005737">
    <property type="term" value="C:cytoplasm"/>
    <property type="evidence" value="ECO:0007669"/>
    <property type="project" value="UniProtKB-SubCell"/>
</dbReference>
<dbReference type="GO" id="GO:0051539">
    <property type="term" value="F:4 iron, 4 sulfur cluster binding"/>
    <property type="evidence" value="ECO:0007669"/>
    <property type="project" value="UniProtKB-UniRule"/>
</dbReference>
<dbReference type="GO" id="GO:0016992">
    <property type="term" value="F:lipoate synthase activity"/>
    <property type="evidence" value="ECO:0007669"/>
    <property type="project" value="UniProtKB-UniRule"/>
</dbReference>
<dbReference type="GO" id="GO:0046872">
    <property type="term" value="F:metal ion binding"/>
    <property type="evidence" value="ECO:0007669"/>
    <property type="project" value="UniProtKB-KW"/>
</dbReference>
<dbReference type="CDD" id="cd01335">
    <property type="entry name" value="Radical_SAM"/>
    <property type="match status" value="1"/>
</dbReference>
<dbReference type="FunFam" id="3.20.20.70:FF:000040">
    <property type="entry name" value="Lipoyl synthase"/>
    <property type="match status" value="1"/>
</dbReference>
<dbReference type="Gene3D" id="3.20.20.70">
    <property type="entry name" value="Aldolase class I"/>
    <property type="match status" value="1"/>
</dbReference>
<dbReference type="HAMAP" id="MF_00206">
    <property type="entry name" value="Lipoyl_synth"/>
    <property type="match status" value="1"/>
</dbReference>
<dbReference type="InterPro" id="IPR013785">
    <property type="entry name" value="Aldolase_TIM"/>
</dbReference>
<dbReference type="InterPro" id="IPR006638">
    <property type="entry name" value="Elp3/MiaA/NifB-like_rSAM"/>
</dbReference>
<dbReference type="InterPro" id="IPR031691">
    <property type="entry name" value="LIAS_N"/>
</dbReference>
<dbReference type="InterPro" id="IPR003698">
    <property type="entry name" value="Lipoyl_synth"/>
</dbReference>
<dbReference type="InterPro" id="IPR007197">
    <property type="entry name" value="rSAM"/>
</dbReference>
<dbReference type="NCBIfam" id="TIGR00510">
    <property type="entry name" value="lipA"/>
    <property type="match status" value="1"/>
</dbReference>
<dbReference type="NCBIfam" id="NF004019">
    <property type="entry name" value="PRK05481.1"/>
    <property type="match status" value="1"/>
</dbReference>
<dbReference type="NCBIfam" id="NF009544">
    <property type="entry name" value="PRK12928.1"/>
    <property type="match status" value="1"/>
</dbReference>
<dbReference type="PANTHER" id="PTHR10949">
    <property type="entry name" value="LIPOYL SYNTHASE"/>
    <property type="match status" value="1"/>
</dbReference>
<dbReference type="PANTHER" id="PTHR10949:SF0">
    <property type="entry name" value="LIPOYL SYNTHASE, MITOCHONDRIAL"/>
    <property type="match status" value="1"/>
</dbReference>
<dbReference type="Pfam" id="PF16881">
    <property type="entry name" value="LIAS_N"/>
    <property type="match status" value="1"/>
</dbReference>
<dbReference type="Pfam" id="PF04055">
    <property type="entry name" value="Radical_SAM"/>
    <property type="match status" value="1"/>
</dbReference>
<dbReference type="PIRSF" id="PIRSF005963">
    <property type="entry name" value="Lipoyl_synth"/>
    <property type="match status" value="1"/>
</dbReference>
<dbReference type="SFLD" id="SFLDF00271">
    <property type="entry name" value="lipoyl_synthase"/>
    <property type="match status" value="1"/>
</dbReference>
<dbReference type="SFLD" id="SFLDG01058">
    <property type="entry name" value="lipoyl_synthase_like"/>
    <property type="match status" value="1"/>
</dbReference>
<dbReference type="SMART" id="SM00729">
    <property type="entry name" value="Elp3"/>
    <property type="match status" value="1"/>
</dbReference>
<dbReference type="SUPFAM" id="SSF102114">
    <property type="entry name" value="Radical SAM enzymes"/>
    <property type="match status" value="1"/>
</dbReference>
<dbReference type="PROSITE" id="PS51918">
    <property type="entry name" value="RADICAL_SAM"/>
    <property type="match status" value="1"/>
</dbReference>
<reference key="1">
    <citation type="submission" date="2006-03" db="EMBL/GenBank/DDBJ databases">
        <title>Complete sequence of chromosome of Psychrobacter cryohalolentis K5.</title>
        <authorList>
            <consortium name="US DOE Joint Genome Institute"/>
            <person name="Copeland A."/>
            <person name="Lucas S."/>
            <person name="Lapidus A."/>
            <person name="Barry K."/>
            <person name="Detter J.C."/>
            <person name="Glavina T."/>
            <person name="Hammon N."/>
            <person name="Israni S."/>
            <person name="Dalin E."/>
            <person name="Tice H."/>
            <person name="Pitluck S."/>
            <person name="Brettin T."/>
            <person name="Bruce D."/>
            <person name="Han C."/>
            <person name="Tapia R."/>
            <person name="Sims D.R."/>
            <person name="Gilna P."/>
            <person name="Schmutz J."/>
            <person name="Larimer F."/>
            <person name="Land M."/>
            <person name="Hauser L."/>
            <person name="Kyrpides N."/>
            <person name="Kim E."/>
            <person name="Richardson P."/>
        </authorList>
    </citation>
    <scope>NUCLEOTIDE SEQUENCE [LARGE SCALE GENOMIC DNA]</scope>
    <source>
        <strain>ATCC BAA-1226 / DSM 17306 / VKM B-2378 / K5</strain>
    </source>
</reference>